<reference key="1">
    <citation type="journal article" date="1998" name="Genes Dev.">
        <title>Pleiotropic control of glucose and hormone responses by PRL1, a nuclear WD protein, in Arabidopsis.</title>
        <authorList>
            <person name="Nemeth K."/>
            <person name="Salchert K."/>
            <person name="Putnoky P."/>
            <person name="Bhalerao R."/>
            <person name="Koncz-Kalman Z."/>
            <person name="Stankovic-Stangeland B."/>
            <person name="Bako L."/>
            <person name="Mathur J."/>
            <person name="Oekresz L."/>
            <person name="Stabel S."/>
            <person name="Geigenberger P."/>
            <person name="Stitt M."/>
            <person name="Redei G.P."/>
            <person name="Schell J."/>
            <person name="Koncz C."/>
        </authorList>
    </citation>
    <scope>NUCLEOTIDE SEQUENCE [GENOMIC DNA / MRNA]</scope>
    <scope>FUNCTION</scope>
    <scope>SUBCELLULAR LOCATION</scope>
    <scope>INTERACTION WITH KAP2</scope>
    <source>
        <strain>cv. Columbia</strain>
    </source>
</reference>
<reference key="2">
    <citation type="journal article" date="1998" name="Nature">
        <title>Analysis of 1.9 Mb of contiguous sequence from chromosome 4 of Arabidopsis thaliana.</title>
        <authorList>
            <person name="Bevan M."/>
            <person name="Bancroft I."/>
            <person name="Bent E."/>
            <person name="Love K."/>
            <person name="Goodman H.M."/>
            <person name="Dean C."/>
            <person name="Bergkamp R."/>
            <person name="Dirkse W."/>
            <person name="van Staveren M."/>
            <person name="Stiekema W."/>
            <person name="Drost L."/>
            <person name="Ridley P."/>
            <person name="Hudson S.-A."/>
            <person name="Patel K."/>
            <person name="Murphy G."/>
            <person name="Piffanelli P."/>
            <person name="Wedler H."/>
            <person name="Wedler E."/>
            <person name="Wambutt R."/>
            <person name="Weitzenegger T."/>
            <person name="Pohl T."/>
            <person name="Terryn N."/>
            <person name="Gielen J."/>
            <person name="Villarroel R."/>
            <person name="De Clercq R."/>
            <person name="van Montagu M."/>
            <person name="Lecharny A."/>
            <person name="Aubourg S."/>
            <person name="Gy I."/>
            <person name="Kreis M."/>
            <person name="Lao N."/>
            <person name="Kavanagh T."/>
            <person name="Hempel S."/>
            <person name="Kotter P."/>
            <person name="Entian K.-D."/>
            <person name="Rieger M."/>
            <person name="Schaefer M."/>
            <person name="Funk B."/>
            <person name="Mueller-Auer S."/>
            <person name="Silvey M."/>
            <person name="James R."/>
            <person name="Monfort A."/>
            <person name="Pons A."/>
            <person name="Puigdomenech P."/>
            <person name="Douka A."/>
            <person name="Voukelatou E."/>
            <person name="Milioni D."/>
            <person name="Hatzopoulos P."/>
            <person name="Piravandi E."/>
            <person name="Obermaier B."/>
            <person name="Hilbert H."/>
            <person name="Duesterhoeft A."/>
            <person name="Moores T."/>
            <person name="Jones J.D.G."/>
            <person name="Eneva T."/>
            <person name="Palme K."/>
            <person name="Benes V."/>
            <person name="Rechmann S."/>
            <person name="Ansorge W."/>
            <person name="Cooke R."/>
            <person name="Berger C."/>
            <person name="Delseny M."/>
            <person name="Voet M."/>
            <person name="Volckaert G."/>
            <person name="Mewes H.-W."/>
            <person name="Klosterman S."/>
            <person name="Schueller C."/>
            <person name="Chalwatzis N."/>
        </authorList>
    </citation>
    <scope>NUCLEOTIDE SEQUENCE [LARGE SCALE GENOMIC DNA]</scope>
    <source>
        <strain>cv. Columbia</strain>
    </source>
</reference>
<reference key="3">
    <citation type="journal article" date="1999" name="Nature">
        <title>Sequence and analysis of chromosome 4 of the plant Arabidopsis thaliana.</title>
        <authorList>
            <person name="Mayer K.F.X."/>
            <person name="Schueller C."/>
            <person name="Wambutt R."/>
            <person name="Murphy G."/>
            <person name="Volckaert G."/>
            <person name="Pohl T."/>
            <person name="Duesterhoeft A."/>
            <person name="Stiekema W."/>
            <person name="Entian K.-D."/>
            <person name="Terryn N."/>
            <person name="Harris B."/>
            <person name="Ansorge W."/>
            <person name="Brandt P."/>
            <person name="Grivell L.A."/>
            <person name="Rieger M."/>
            <person name="Weichselgartner M."/>
            <person name="de Simone V."/>
            <person name="Obermaier B."/>
            <person name="Mache R."/>
            <person name="Mueller M."/>
            <person name="Kreis M."/>
            <person name="Delseny M."/>
            <person name="Puigdomenech P."/>
            <person name="Watson M."/>
            <person name="Schmidtheini T."/>
            <person name="Reichert B."/>
            <person name="Portetelle D."/>
            <person name="Perez-Alonso M."/>
            <person name="Boutry M."/>
            <person name="Bancroft I."/>
            <person name="Vos P."/>
            <person name="Hoheisel J."/>
            <person name="Zimmermann W."/>
            <person name="Wedler H."/>
            <person name="Ridley P."/>
            <person name="Langham S.-A."/>
            <person name="McCullagh B."/>
            <person name="Bilham L."/>
            <person name="Robben J."/>
            <person name="van der Schueren J."/>
            <person name="Grymonprez B."/>
            <person name="Chuang Y.-J."/>
            <person name="Vandenbussche F."/>
            <person name="Braeken M."/>
            <person name="Weltjens I."/>
            <person name="Voet M."/>
            <person name="Bastiaens I."/>
            <person name="Aert R."/>
            <person name="Defoor E."/>
            <person name="Weitzenegger T."/>
            <person name="Bothe G."/>
            <person name="Ramsperger U."/>
            <person name="Hilbert H."/>
            <person name="Braun M."/>
            <person name="Holzer E."/>
            <person name="Brandt A."/>
            <person name="Peters S."/>
            <person name="van Staveren M."/>
            <person name="Dirkse W."/>
            <person name="Mooijman P."/>
            <person name="Klein Lankhorst R."/>
            <person name="Rose M."/>
            <person name="Hauf J."/>
            <person name="Koetter P."/>
            <person name="Berneiser S."/>
            <person name="Hempel S."/>
            <person name="Feldpausch M."/>
            <person name="Lamberth S."/>
            <person name="Van den Daele H."/>
            <person name="De Keyser A."/>
            <person name="Buysshaert C."/>
            <person name="Gielen J."/>
            <person name="Villarroel R."/>
            <person name="De Clercq R."/>
            <person name="van Montagu M."/>
            <person name="Rogers J."/>
            <person name="Cronin A."/>
            <person name="Quail M.A."/>
            <person name="Bray-Allen S."/>
            <person name="Clark L."/>
            <person name="Doggett J."/>
            <person name="Hall S."/>
            <person name="Kay M."/>
            <person name="Lennard N."/>
            <person name="McLay K."/>
            <person name="Mayes R."/>
            <person name="Pettett A."/>
            <person name="Rajandream M.A."/>
            <person name="Lyne M."/>
            <person name="Benes V."/>
            <person name="Rechmann S."/>
            <person name="Borkova D."/>
            <person name="Bloecker H."/>
            <person name="Scharfe M."/>
            <person name="Grimm M."/>
            <person name="Loehnert T.-H."/>
            <person name="Dose S."/>
            <person name="de Haan M."/>
            <person name="Maarse A.C."/>
            <person name="Schaefer M."/>
            <person name="Mueller-Auer S."/>
            <person name="Gabel C."/>
            <person name="Fuchs M."/>
            <person name="Fartmann B."/>
            <person name="Granderath K."/>
            <person name="Dauner D."/>
            <person name="Herzl A."/>
            <person name="Neumann S."/>
            <person name="Argiriou A."/>
            <person name="Vitale D."/>
            <person name="Liguori R."/>
            <person name="Piravandi E."/>
            <person name="Massenet O."/>
            <person name="Quigley F."/>
            <person name="Clabauld G."/>
            <person name="Muendlein A."/>
            <person name="Felber R."/>
            <person name="Schnabl S."/>
            <person name="Hiller R."/>
            <person name="Schmidt W."/>
            <person name="Lecharny A."/>
            <person name="Aubourg S."/>
            <person name="Chefdor F."/>
            <person name="Cooke R."/>
            <person name="Berger C."/>
            <person name="Monfort A."/>
            <person name="Casacuberta E."/>
            <person name="Gibbons T."/>
            <person name="Weber N."/>
            <person name="Vandenbol M."/>
            <person name="Bargues M."/>
            <person name="Terol J."/>
            <person name="Torres A."/>
            <person name="Perez-Perez A."/>
            <person name="Purnelle B."/>
            <person name="Bent E."/>
            <person name="Johnson S."/>
            <person name="Tacon D."/>
            <person name="Jesse T."/>
            <person name="Heijnen L."/>
            <person name="Schwarz S."/>
            <person name="Scholler P."/>
            <person name="Heber S."/>
            <person name="Francs P."/>
            <person name="Bielke C."/>
            <person name="Frishman D."/>
            <person name="Haase D."/>
            <person name="Lemcke K."/>
            <person name="Mewes H.-W."/>
            <person name="Stocker S."/>
            <person name="Zaccaria P."/>
            <person name="Bevan M."/>
            <person name="Wilson R.K."/>
            <person name="de la Bastide M."/>
            <person name="Habermann K."/>
            <person name="Parnell L."/>
            <person name="Dedhia N."/>
            <person name="Gnoj L."/>
            <person name="Schutz K."/>
            <person name="Huang E."/>
            <person name="Spiegel L."/>
            <person name="Sekhon M."/>
            <person name="Murray J."/>
            <person name="Sheet P."/>
            <person name="Cordes M."/>
            <person name="Abu-Threideh J."/>
            <person name="Stoneking T."/>
            <person name="Kalicki J."/>
            <person name="Graves T."/>
            <person name="Harmon G."/>
            <person name="Edwards J."/>
            <person name="Latreille P."/>
            <person name="Courtney L."/>
            <person name="Cloud J."/>
            <person name="Abbott A."/>
            <person name="Scott K."/>
            <person name="Johnson D."/>
            <person name="Minx P."/>
            <person name="Bentley D."/>
            <person name="Fulton B."/>
            <person name="Miller N."/>
            <person name="Greco T."/>
            <person name="Kemp K."/>
            <person name="Kramer J."/>
            <person name="Fulton L."/>
            <person name="Mardis E."/>
            <person name="Dante M."/>
            <person name="Pepin K."/>
            <person name="Hillier L.W."/>
            <person name="Nelson J."/>
            <person name="Spieth J."/>
            <person name="Ryan E."/>
            <person name="Andrews S."/>
            <person name="Geisel C."/>
            <person name="Layman D."/>
            <person name="Du H."/>
            <person name="Ali J."/>
            <person name="Berghoff A."/>
            <person name="Jones K."/>
            <person name="Drone K."/>
            <person name="Cotton M."/>
            <person name="Joshu C."/>
            <person name="Antonoiu B."/>
            <person name="Zidanic M."/>
            <person name="Strong C."/>
            <person name="Sun H."/>
            <person name="Lamar B."/>
            <person name="Yordan C."/>
            <person name="Ma P."/>
            <person name="Zhong J."/>
            <person name="Preston R."/>
            <person name="Vil D."/>
            <person name="Shekher M."/>
            <person name="Matero A."/>
            <person name="Shah R."/>
            <person name="Swaby I.K."/>
            <person name="O'Shaughnessy A."/>
            <person name="Rodriguez M."/>
            <person name="Hoffman J."/>
            <person name="Till S."/>
            <person name="Granat S."/>
            <person name="Shohdy N."/>
            <person name="Hasegawa A."/>
            <person name="Hameed A."/>
            <person name="Lodhi M."/>
            <person name="Johnson A."/>
            <person name="Chen E."/>
            <person name="Marra M.A."/>
            <person name="Martienssen R."/>
            <person name="McCombie W.R."/>
        </authorList>
    </citation>
    <scope>NUCLEOTIDE SEQUENCE [LARGE SCALE GENOMIC DNA]</scope>
    <source>
        <strain>cv. Columbia</strain>
    </source>
</reference>
<reference key="4">
    <citation type="journal article" date="2017" name="Plant J.">
        <title>Araport11: a complete reannotation of the Arabidopsis thaliana reference genome.</title>
        <authorList>
            <person name="Cheng C.Y."/>
            <person name="Krishnakumar V."/>
            <person name="Chan A.P."/>
            <person name="Thibaud-Nissen F."/>
            <person name="Schobel S."/>
            <person name="Town C.D."/>
        </authorList>
    </citation>
    <scope>GENOME REANNOTATION</scope>
    <source>
        <strain>cv. Columbia</strain>
    </source>
</reference>
<reference key="5">
    <citation type="journal article" date="1998" name="Philos. Trans. R. Soc. Lond., B, Biol. Sci.">
        <title>Control of cell elongation and stress responses by steroid hormones and carbon catabolic repression in plants.</title>
        <authorList>
            <person name="Salchert K."/>
            <person name="Bhalerao R."/>
            <person name="Koncz-Kalman Z."/>
            <person name="Koncz C."/>
        </authorList>
    </citation>
    <scope>REVIEW</scope>
    <scope>FUNCTION</scope>
</reference>
<reference key="6">
    <citation type="journal article" date="1999" name="Proc. Natl. Acad. Sci. U.S.A.">
        <title>Regulatory interaction of PRL1 WD protein with Arabidopsis SNF1-like protein kinases.</title>
        <authorList>
            <person name="Bhalerao R.P."/>
            <person name="Salchert K."/>
            <person name="Bako L."/>
            <person name="Oekresz L."/>
            <person name="Szabados L."/>
            <person name="Muranaka T."/>
            <person name="Machida Y."/>
            <person name="Schell J."/>
            <person name="Koncz C."/>
        </authorList>
    </citation>
    <scope>FUNCTION</scope>
    <scope>INTERACTION WITH AKIN10; AKIN11 AND PIPC</scope>
</reference>
<reference key="7">
    <citation type="journal article" date="2001" name="EMBO J.">
        <title>SKP1-SnRK protein kinase interactions mediate proteasomal binding of a plant SCF ubiquitin ligase.</title>
        <authorList>
            <person name="Farras R."/>
            <person name="Ferrando A."/>
            <person name="Jasik J."/>
            <person name="Kleinow T."/>
            <person name="Oekresz L."/>
            <person name="Tiburcio A."/>
            <person name="Salchert K."/>
            <person name="del Pozo C."/>
            <person name="Schell J."/>
            <person name="Koncz C."/>
        </authorList>
    </citation>
    <scope>FUNCTION</scope>
</reference>
<reference key="8">
    <citation type="journal article" date="2007" name="Genes Dev.">
        <title>Regulation of plant innate immunity by three proteins in a complex conserved across the plant and animal kingdoms.</title>
        <authorList>
            <person name="Palma K."/>
            <person name="Zhao Q."/>
            <person name="Cheng Y.T."/>
            <person name="Bi D."/>
            <person name="Monaghan J."/>
            <person name="Cheng W."/>
            <person name="Zhang Y."/>
            <person name="Li X."/>
        </authorList>
    </citation>
    <scope>DISRUPTION PHENOTYPE</scope>
    <scope>FUNCTION</scope>
    <scope>COMPONENT OF THE MAC COMPLEX</scope>
    <scope>INTERACTION WITH CDC5</scope>
</reference>
<reference key="9">
    <citation type="journal article" date="2007" name="Plant Cell">
        <title>Signaling from an altered cell wall to the nucleus mediates sugar-responsive growth and development in Arabidopsis thaliana.</title>
        <authorList>
            <person name="Li Y."/>
            <person name="Smith C."/>
            <person name="Corke F."/>
            <person name="Zheng L."/>
            <person name="Merali Z."/>
            <person name="Ryden P."/>
            <person name="Derbyshire P."/>
            <person name="Waldron K."/>
            <person name="Bevan M.W."/>
        </authorList>
    </citation>
    <scope>FUNCTION</scope>
</reference>
<reference key="10">
    <citation type="journal article" date="2008" name="Plant Cell">
        <title>Characterization of Arabidopsis and rice DWD proteins and their roles as substrate receptors for CUL4-RING E3 ubiquitin ligases.</title>
        <authorList>
            <person name="Lee J.H."/>
            <person name="Terzaghi W."/>
            <person name="Gusmaroli G."/>
            <person name="Charron J.B."/>
            <person name="Yoon H.J."/>
            <person name="Chen H."/>
            <person name="He Y.J."/>
            <person name="Xiong Y."/>
            <person name="Deng X.W."/>
        </authorList>
    </citation>
    <scope>INTERACTION WITH DDB1A</scope>
    <scope>COMPONENT OF THE CUL4-RBX1-DDB1-PRL1 COMPLEX</scope>
    <scope>DWD MOTIFS</scope>
    <scope>FUNCTION</scope>
</reference>
<reference key="11">
    <citation type="journal article" date="2010" name="Mol. Plant">
        <title>PLEIOTROPIC REGULATORY LOCUS 1 (PRL1) integrates the regulation of sugar responses with isoprenoid metabolism in Arabidopsis.</title>
        <authorList>
            <person name="Flores-Perez U."/>
            <person name="Perez-Gil J."/>
            <person name="Closa M."/>
            <person name="Wright L.P."/>
            <person name="Botella-Pavia P."/>
            <person name="Phillips M.A."/>
            <person name="Ferrer A."/>
            <person name="Gershenzon J."/>
            <person name="Rodriguez-Concepcion M."/>
        </authorList>
    </citation>
    <scope>FUNCTION</scope>
</reference>
<reference key="12">
    <citation type="journal article" date="2009" name="Plant J.">
        <title>Modulation of (1)O(2)-mediated retrograde signaling by the PLEIOTROPIC RESPONSE LOCUS 1 (PRL1) protein, a central integrator of stress and energy signaling.</title>
        <authorList>
            <person name="Baruah A."/>
            <person name="Simkova K."/>
            <person name="Hincha D.K."/>
            <person name="Apel K."/>
            <person name="Laloi C."/>
        </authorList>
    </citation>
    <scope>FUNCTION</scope>
</reference>
<reference key="13">
    <citation type="journal article" date="2009" name="PLoS Pathog.">
        <title>Two Prp19-like U-box proteins in the MOS4-associated complex play redundant roles in plant innate immunity.</title>
        <authorList>
            <person name="Monaghan J."/>
            <person name="Xu F."/>
            <person name="Gao M."/>
            <person name="Zhao Q."/>
            <person name="Palma K."/>
            <person name="Long C."/>
            <person name="Chen S."/>
            <person name="Zhang Y."/>
            <person name="Li X."/>
        </authorList>
    </citation>
    <scope>IDENTIFICATION BY MASS SPECTROMETRY</scope>
    <scope>COMPONENT OF THE MAC COMPLEX</scope>
</reference>
<evidence type="ECO:0000256" key="1">
    <source>
        <dbReference type="SAM" id="MobiDB-lite"/>
    </source>
</evidence>
<evidence type="ECO:0000269" key="2">
    <source>
    </source>
</evidence>
<evidence type="ECO:0000269" key="3">
    <source>
    </source>
</evidence>
<evidence type="ECO:0000269" key="4">
    <source>
    </source>
</evidence>
<evidence type="ECO:0000269" key="5">
    <source>
    </source>
</evidence>
<evidence type="ECO:0000269" key="6">
    <source>
    </source>
</evidence>
<evidence type="ECO:0000269" key="7">
    <source>
    </source>
</evidence>
<evidence type="ECO:0000269" key="8">
    <source>
    </source>
</evidence>
<evidence type="ECO:0000269" key="9">
    <source>
    </source>
</evidence>
<evidence type="ECO:0000269" key="10">
    <source>
    </source>
</evidence>
<evidence type="ECO:0000269" key="11">
    <source>
    </source>
</evidence>
<evidence type="ECO:0000305" key="12"/>
<accession>Q42384</accession>
<name>PRL1_ARATH</name>
<sequence length="486" mass="54009">MPAPTTEIEPIEAQSLKKLSLKSLKRSLELFSPVHGQFPPPDPEAKQIRLSHKMKVAFGGVEPVVSQPPRQPDRINEQPGPSNALSLAAPEGSKSTQKGATESAIVVGPTLLRPILPKGLNYTGSSGKSTTIIPANVSSYQRNLSTAALMERIPSRWPRPEWHAPWKNYRVIQGHLGWVRSVAFDPSNEWFCTGSADRTIKIWDVATGVLKLTLTGHIEQVRGLAVSNRHTYMFSAGDDKQVKCWDLEQNKVIRSYHGHLSGVYCLALHPTLDVLLTGGRDSVCRVWDIRTKMQIFALSGHDNTVCSVFTRPTDPQVVTGSHDTTIKFWDLRYGKTMSTLTHHKKSVRAMTLHPKENAFASASADNTKKFSLPKGEFCHNMLSQQKTIINAMAVNEDGVMVTGGDNGSIWFWDWKSGHSFQQSETIVQPGSLESEAGIYAACYDNTGSRLVTCEADKTIKMWKEDENATPETHPINFKPPKEIRRF</sequence>
<dbReference type="EMBL" id="X82824">
    <property type="protein sequence ID" value="CAA58031.1"/>
    <property type="molecule type" value="Genomic_DNA"/>
</dbReference>
<dbReference type="EMBL" id="X82825">
    <property type="protein sequence ID" value="CAA58032.1"/>
    <property type="molecule type" value="mRNA"/>
</dbReference>
<dbReference type="EMBL" id="Z97339">
    <property type="protein sequence ID" value="CAB10369.1"/>
    <property type="molecule type" value="Genomic_DNA"/>
</dbReference>
<dbReference type="EMBL" id="AL161542">
    <property type="protein sequence ID" value="CAB78632.1"/>
    <property type="molecule type" value="Genomic_DNA"/>
</dbReference>
<dbReference type="EMBL" id="CP002687">
    <property type="protein sequence ID" value="AEE83664.1"/>
    <property type="molecule type" value="Genomic_DNA"/>
</dbReference>
<dbReference type="PIR" id="S49820">
    <property type="entry name" value="S49820"/>
</dbReference>
<dbReference type="RefSeq" id="NP_193325.1">
    <property type="nucleotide sequence ID" value="NM_117682.3"/>
</dbReference>
<dbReference type="SMR" id="Q42384"/>
<dbReference type="BioGRID" id="12566">
    <property type="interactions" value="20"/>
</dbReference>
<dbReference type="FunCoup" id="Q42384">
    <property type="interactions" value="4518"/>
</dbReference>
<dbReference type="IntAct" id="Q42384">
    <property type="interactions" value="11"/>
</dbReference>
<dbReference type="STRING" id="3702.Q42384"/>
<dbReference type="iPTMnet" id="Q42384"/>
<dbReference type="PaxDb" id="3702-AT4G15900.1"/>
<dbReference type="ProteomicsDB" id="234847"/>
<dbReference type="EnsemblPlants" id="AT4G15900.1">
    <property type="protein sequence ID" value="AT4G15900.1"/>
    <property type="gene ID" value="AT4G15900"/>
</dbReference>
<dbReference type="GeneID" id="827272"/>
<dbReference type="Gramene" id="AT4G15900.1">
    <property type="protein sequence ID" value="AT4G15900.1"/>
    <property type="gene ID" value="AT4G15900"/>
</dbReference>
<dbReference type="KEGG" id="ath:AT4G15900"/>
<dbReference type="Araport" id="AT4G15900"/>
<dbReference type="TAIR" id="AT4G15900">
    <property type="gene designation" value="PRL1"/>
</dbReference>
<dbReference type="eggNOG" id="KOG0285">
    <property type="taxonomic scope" value="Eukaryota"/>
</dbReference>
<dbReference type="HOGENOM" id="CLU_000288_72_2_1"/>
<dbReference type="InParanoid" id="Q42384"/>
<dbReference type="OMA" id="FAMCFDQ"/>
<dbReference type="PhylomeDB" id="Q42384"/>
<dbReference type="UniPathway" id="UPA00143"/>
<dbReference type="CD-CODE" id="4299E36E">
    <property type="entry name" value="Nucleolus"/>
</dbReference>
<dbReference type="PRO" id="PR:Q42384"/>
<dbReference type="Proteomes" id="UP000006548">
    <property type="component" value="Chromosome 4"/>
</dbReference>
<dbReference type="ExpressionAtlas" id="Q42384">
    <property type="expression patterns" value="baseline and differential"/>
</dbReference>
<dbReference type="GO" id="GO:0080008">
    <property type="term" value="C:Cul4-RING E3 ubiquitin ligase complex"/>
    <property type="evidence" value="ECO:0000353"/>
    <property type="project" value="TAIR"/>
</dbReference>
<dbReference type="GO" id="GO:0005829">
    <property type="term" value="C:cytosol"/>
    <property type="evidence" value="ECO:0007005"/>
    <property type="project" value="TAIR"/>
</dbReference>
<dbReference type="GO" id="GO:0005634">
    <property type="term" value="C:nucleus"/>
    <property type="evidence" value="ECO:0000314"/>
    <property type="project" value="TAIR"/>
</dbReference>
<dbReference type="GO" id="GO:0048825">
    <property type="term" value="P:cotyledon development"/>
    <property type="evidence" value="ECO:0000315"/>
    <property type="project" value="TAIR"/>
</dbReference>
<dbReference type="GO" id="GO:0042742">
    <property type="term" value="P:defense response to bacterium"/>
    <property type="evidence" value="ECO:0000315"/>
    <property type="project" value="TAIR"/>
</dbReference>
<dbReference type="GO" id="GO:0050832">
    <property type="term" value="P:defense response to fungus"/>
    <property type="evidence" value="ECO:0000315"/>
    <property type="project" value="TAIR"/>
</dbReference>
<dbReference type="GO" id="GO:0010154">
    <property type="term" value="P:fruit development"/>
    <property type="evidence" value="ECO:0000315"/>
    <property type="project" value="TAIR"/>
</dbReference>
<dbReference type="GO" id="GO:0009755">
    <property type="term" value="P:hormone-mediated signaling pathway"/>
    <property type="evidence" value="ECO:0000315"/>
    <property type="project" value="TAIR"/>
</dbReference>
<dbReference type="GO" id="GO:0045087">
    <property type="term" value="P:innate immune response"/>
    <property type="evidence" value="ECO:0007669"/>
    <property type="project" value="UniProtKB-KW"/>
</dbReference>
<dbReference type="GO" id="GO:0048366">
    <property type="term" value="P:leaf development"/>
    <property type="evidence" value="ECO:0000315"/>
    <property type="project" value="TAIR"/>
</dbReference>
<dbReference type="GO" id="GO:0000398">
    <property type="term" value="P:mRNA splicing, via spliceosome"/>
    <property type="evidence" value="ECO:0007669"/>
    <property type="project" value="InterPro"/>
</dbReference>
<dbReference type="GO" id="GO:0045892">
    <property type="term" value="P:negative regulation of DNA-templated transcription"/>
    <property type="evidence" value="ECO:0000315"/>
    <property type="project" value="TAIR"/>
</dbReference>
<dbReference type="GO" id="GO:0016567">
    <property type="term" value="P:protein ubiquitination"/>
    <property type="evidence" value="ECO:0007669"/>
    <property type="project" value="UniProtKB-UniPathway"/>
</dbReference>
<dbReference type="GO" id="GO:0006508">
    <property type="term" value="P:proteolysis"/>
    <property type="evidence" value="ECO:0000315"/>
    <property type="project" value="TAIR"/>
</dbReference>
<dbReference type="GO" id="GO:0009749">
    <property type="term" value="P:response to glucose"/>
    <property type="evidence" value="ECO:0000315"/>
    <property type="project" value="TAIR"/>
</dbReference>
<dbReference type="GO" id="GO:0048364">
    <property type="term" value="P:root development"/>
    <property type="evidence" value="ECO:0000315"/>
    <property type="project" value="TAIR"/>
</dbReference>
<dbReference type="GO" id="GO:0010182">
    <property type="term" value="P:sugar mediated signaling pathway"/>
    <property type="evidence" value="ECO:0000315"/>
    <property type="project" value="TAIR"/>
</dbReference>
<dbReference type="CDD" id="cd00200">
    <property type="entry name" value="WD40"/>
    <property type="match status" value="1"/>
</dbReference>
<dbReference type="FunFam" id="2.130.10.10:FF:000012">
    <property type="entry name" value="Putative pleiotropic regulator 1"/>
    <property type="match status" value="1"/>
</dbReference>
<dbReference type="Gene3D" id="2.130.10.10">
    <property type="entry name" value="YVTN repeat-like/Quinoprotein amine dehydrogenase"/>
    <property type="match status" value="1"/>
</dbReference>
<dbReference type="InterPro" id="IPR020472">
    <property type="entry name" value="G-protein_beta_WD-40_rep"/>
</dbReference>
<dbReference type="InterPro" id="IPR045241">
    <property type="entry name" value="Prp46/PLRG1-like"/>
</dbReference>
<dbReference type="InterPro" id="IPR015943">
    <property type="entry name" value="WD40/YVTN_repeat-like_dom_sf"/>
</dbReference>
<dbReference type="InterPro" id="IPR019775">
    <property type="entry name" value="WD40_repeat_CS"/>
</dbReference>
<dbReference type="InterPro" id="IPR036322">
    <property type="entry name" value="WD40_repeat_dom_sf"/>
</dbReference>
<dbReference type="InterPro" id="IPR001680">
    <property type="entry name" value="WD40_rpt"/>
</dbReference>
<dbReference type="PANTHER" id="PTHR19923:SF0">
    <property type="entry name" value="PLEIOTROPIC REGULATOR 1"/>
    <property type="match status" value="1"/>
</dbReference>
<dbReference type="PANTHER" id="PTHR19923">
    <property type="entry name" value="WD40 REPEAT PROTEINPRL1/PRL2-RELATED"/>
    <property type="match status" value="1"/>
</dbReference>
<dbReference type="Pfam" id="PF00400">
    <property type="entry name" value="WD40"/>
    <property type="match status" value="7"/>
</dbReference>
<dbReference type="PRINTS" id="PR00320">
    <property type="entry name" value="GPROTEINBRPT"/>
</dbReference>
<dbReference type="SMART" id="SM00320">
    <property type="entry name" value="WD40"/>
    <property type="match status" value="7"/>
</dbReference>
<dbReference type="SUPFAM" id="SSF50978">
    <property type="entry name" value="WD40 repeat-like"/>
    <property type="match status" value="1"/>
</dbReference>
<dbReference type="PROSITE" id="PS00678">
    <property type="entry name" value="WD_REPEATS_1"/>
    <property type="match status" value="2"/>
</dbReference>
<dbReference type="PROSITE" id="PS50082">
    <property type="entry name" value="WD_REPEATS_2"/>
    <property type="match status" value="5"/>
</dbReference>
<dbReference type="PROSITE" id="PS50294">
    <property type="entry name" value="WD_REPEATS_REGION"/>
    <property type="match status" value="1"/>
</dbReference>
<gene>
    <name type="primary">PRL1</name>
    <name type="synonym">MAC2</name>
    <name type="ordered locus">At4g15900</name>
    <name type="ORF">dl3990w</name>
    <name type="ORF">FCAALL.40</name>
</gene>
<comment type="function">
    <text evidence="2 3 4 5 6 7 9 10 11">Pleiotropic regulator of glucose, stress and hormone responses. Also regulates cytochrome P450 CYP90A1/CPD. Coordinates the expression of hormone- and stress-related genes and genes related to cell wall modification and growth, leading to altered sugar-dependent growth and developmental responses. Component of the MAC complex that probably regulates defense responses through transcriptional control and thereby is essential for plant innate immunity. By suppressing the expression of several (1)O(2)-responsive genes, PRL1 seems to play a major role in modulating responses of plants to environmental changes by interconnecting (1)O(2)-mediated retrograde signaling with other signaling pathways. Acts as a negative regulator of SNF1-related protein kinases AKIN10 and AKIN11 via the inhibition of their interaction with SKP1/ASK1. Component of the CUL4-RBX1-DDB1-PRL1 E3 ubiquitin-protein ligase complex, PRL1 may function as the substrate recognition module within this complex, leading to the AKIN10 degradation.</text>
</comment>
<comment type="pathway">
    <text>Protein modification; protein ubiquitination.</text>
</comment>
<comment type="subunit">
    <text evidence="2 4 6 8 10">Component of the multiprotein assembly MOS4-associated complex (MAC) at least composed of MOS4, CDC5, PRL1 and PRP19 (PubMed:17575050, PubMed:19629177). Interacts with CDC5 (PubMed:17575050). Component of the CUL4-RBX1-DDB1-PRL1 E3 ubiquitin-protein ligase complex. Interacts with DDB1A through its DWD motif (PubMed:18223036). Interacts with AKIN10, AKIN11 and PIPC (PubMed:10220464). Interacts with KAP2 (PubMed:9765207).</text>
</comment>
<comment type="interaction">
    <interactant intactId="EBI-1382964">
        <id>Q42384</id>
    </interactant>
    <interactant intactId="EBI-1382948">
        <id>P92948</id>
        <label>CDC5</label>
    </interactant>
    <organismsDiffer>false</organismsDiffer>
    <experiments>2</experiments>
</comment>
<comment type="interaction">
    <interactant intactId="EBI-1382964">
        <id>Q42384</id>
    </interactant>
    <interactant intactId="EBI-1644689">
        <id>O04294</id>
        <label>IMPA3</label>
    </interactant>
    <organismsDiffer>false</organismsDiffer>
    <experiments>3</experiments>
</comment>
<comment type="interaction">
    <interactant intactId="EBI-1382964">
        <id>Q42384</id>
    </interactant>
    <interactant intactId="EBI-20798606">
        <id>Q38997-2</id>
        <label>KIN10</label>
    </interactant>
    <organismsDiffer>false</organismsDiffer>
    <experiments>3</experiments>
</comment>
<comment type="interaction">
    <interactant intactId="EBI-1382964">
        <id>Q42384</id>
    </interactant>
    <interactant intactId="EBI-307202">
        <id>P92958</id>
        <label>KIN11</label>
    </interactant>
    <organismsDiffer>false</organismsDiffer>
    <experiments>2</experiments>
</comment>
<comment type="subcellular location">
    <subcellularLocation>
        <location evidence="10">Nucleus</location>
    </subcellularLocation>
</comment>
<comment type="domain">
    <text evidence="6">The DWD box is required for interaction with DDB1A.</text>
</comment>
<comment type="disruption phenotype">
    <text evidence="4">Hypersensitivity to glucose and sucrose. Enhanced sensitivity of plants to stress and to growth hormones including cytokinin, ethylene, abscisic acid, and auxin. Accumulation of sugars and starch in leaves, and root elongation. Cell elongation defects. Enhanced susceptibility to virulent and avirulent pathogens.</text>
</comment>
<comment type="similarity">
    <text evidence="12">Belongs to the WD repeat PRL1/PRL2 family.</text>
</comment>
<proteinExistence type="evidence at protein level"/>
<feature type="chain" id="PRO_0000051157" description="Protein pleiotropic regulatory locus 1">
    <location>
        <begin position="1"/>
        <end position="486"/>
    </location>
</feature>
<feature type="repeat" description="WD 1">
    <location>
        <begin position="174"/>
        <end position="204"/>
    </location>
</feature>
<feature type="repeat" description="WD 2">
    <location>
        <begin position="216"/>
        <end position="246"/>
    </location>
</feature>
<feature type="repeat" description="WD 3">
    <location>
        <begin position="258"/>
        <end position="288"/>
    </location>
</feature>
<feature type="repeat" description="WD 4">
    <location>
        <begin position="300"/>
        <end position="330"/>
    </location>
</feature>
<feature type="repeat" description="WD 5">
    <location>
        <begin position="342"/>
        <end position="371"/>
    </location>
</feature>
<feature type="repeat" description="WD 6">
    <location>
        <begin position="384"/>
        <end position="413"/>
    </location>
</feature>
<feature type="repeat" description="WD 7">
    <location>
        <begin position="433"/>
        <end position="463"/>
    </location>
</feature>
<feature type="region of interest" description="Disordered" evidence="1">
    <location>
        <begin position="62"/>
        <end position="101"/>
    </location>
</feature>
<feature type="region of interest" description="Disordered" evidence="1">
    <location>
        <begin position="465"/>
        <end position="486"/>
    </location>
</feature>
<feature type="short sequence motif" description="DWD box 1">
    <location>
        <begin position="275"/>
        <end position="290"/>
    </location>
</feature>
<feature type="short sequence motif" description="DWD box 2">
    <location>
        <begin position="317"/>
        <end position="332"/>
    </location>
</feature>
<organism>
    <name type="scientific">Arabidopsis thaliana</name>
    <name type="common">Mouse-ear cress</name>
    <dbReference type="NCBI Taxonomy" id="3702"/>
    <lineage>
        <taxon>Eukaryota</taxon>
        <taxon>Viridiplantae</taxon>
        <taxon>Streptophyta</taxon>
        <taxon>Embryophyta</taxon>
        <taxon>Tracheophyta</taxon>
        <taxon>Spermatophyta</taxon>
        <taxon>Magnoliopsida</taxon>
        <taxon>eudicotyledons</taxon>
        <taxon>Gunneridae</taxon>
        <taxon>Pentapetalae</taxon>
        <taxon>rosids</taxon>
        <taxon>malvids</taxon>
        <taxon>Brassicales</taxon>
        <taxon>Brassicaceae</taxon>
        <taxon>Camelineae</taxon>
        <taxon>Arabidopsis</taxon>
    </lineage>
</organism>
<protein>
    <recommendedName>
        <fullName>Protein pleiotropic regulatory locus 1</fullName>
        <shortName>Protein PRL1</shortName>
    </recommendedName>
    <alternativeName>
        <fullName>MOS4-associated complex protein 2</fullName>
        <shortName>MAC protein 2</shortName>
    </alternativeName>
</protein>
<keyword id="KW-0391">Immunity</keyword>
<keyword id="KW-0399">Innate immunity</keyword>
<keyword id="KW-0539">Nucleus</keyword>
<keyword id="KW-0611">Plant defense</keyword>
<keyword id="KW-1185">Reference proteome</keyword>
<keyword id="KW-0677">Repeat</keyword>
<keyword id="KW-0833">Ubl conjugation pathway</keyword>
<keyword id="KW-0853">WD repeat</keyword>